<protein>
    <recommendedName>
        <fullName evidence="2">Acetyl-coenzyme A carboxylase carboxyl transferase subunit beta, chloroplastic</fullName>
        <shortName evidence="2">ACCase subunit beta</shortName>
        <shortName evidence="2">Acetyl-CoA carboxylase carboxyltransferase subunit beta</shortName>
        <ecNumber evidence="2">2.1.3.15</ecNumber>
    </recommendedName>
</protein>
<name>ACCD_CALFG</name>
<gene>
    <name evidence="2" type="primary">accD</name>
</gene>
<reference key="1">
    <citation type="journal article" date="2003" name="Plant Syst. Evol.">
        <title>The chloroplast genome of the 'basal' angiosperm Calycanthus fertilis -- structural and phylogenetic analyses.</title>
        <authorList>
            <person name="Goremykin V."/>
            <person name="Hirsch-Ernst K.I."/>
            <person name="Woelfl S."/>
            <person name="Hellwig F.H."/>
        </authorList>
    </citation>
    <scope>NUCLEOTIDE SEQUENCE [LARGE SCALE GENOMIC DNA]</scope>
</reference>
<accession>Q7YIX5</accession>
<comment type="function">
    <text evidence="2">Component of the acetyl coenzyme A carboxylase (ACC) complex. Biotin carboxylase (BC) catalyzes the carboxylation of biotin on its carrier protein (BCCP) and then the CO(2) group is transferred by the transcarboxylase to acetyl-CoA to form malonyl-CoA.</text>
</comment>
<comment type="catalytic activity">
    <reaction evidence="2">
        <text>N(6)-carboxybiotinyl-L-lysyl-[protein] + acetyl-CoA = N(6)-biotinyl-L-lysyl-[protein] + malonyl-CoA</text>
        <dbReference type="Rhea" id="RHEA:54728"/>
        <dbReference type="Rhea" id="RHEA-COMP:10505"/>
        <dbReference type="Rhea" id="RHEA-COMP:10506"/>
        <dbReference type="ChEBI" id="CHEBI:57288"/>
        <dbReference type="ChEBI" id="CHEBI:57384"/>
        <dbReference type="ChEBI" id="CHEBI:83144"/>
        <dbReference type="ChEBI" id="CHEBI:83145"/>
        <dbReference type="EC" id="2.1.3.15"/>
    </reaction>
</comment>
<comment type="cofactor">
    <cofactor evidence="2">
        <name>Zn(2+)</name>
        <dbReference type="ChEBI" id="CHEBI:29105"/>
    </cofactor>
    <text evidence="2">Binds 1 zinc ion per subunit.</text>
</comment>
<comment type="pathway">
    <text evidence="2">Lipid metabolism; malonyl-CoA biosynthesis; malonyl-CoA from acetyl-CoA: step 1/1.</text>
</comment>
<comment type="subunit">
    <text evidence="1">Acetyl-CoA carboxylase is a heterohexamer composed of biotin carboxyl carrier protein, biotin carboxylase and 2 subunits each of ACCase subunit alpha and ACCase plastid-coded subunit beta (accD).</text>
</comment>
<comment type="subcellular location">
    <subcellularLocation>
        <location evidence="2">Plastid</location>
        <location evidence="2">Chloroplast stroma</location>
    </subcellularLocation>
</comment>
<comment type="similarity">
    <text evidence="2">Belongs to the AccD/PCCB family.</text>
</comment>
<dbReference type="EC" id="2.1.3.15" evidence="2"/>
<dbReference type="EMBL" id="AJ428413">
    <property type="protein sequence ID" value="CAD28730.1"/>
    <property type="molecule type" value="Genomic_DNA"/>
</dbReference>
<dbReference type="RefSeq" id="NP_862763.1">
    <property type="nucleotide sequence ID" value="NC_004993.1"/>
</dbReference>
<dbReference type="SMR" id="Q7YIX5"/>
<dbReference type="GeneID" id="2597973"/>
<dbReference type="UniPathway" id="UPA00655">
    <property type="reaction ID" value="UER00711"/>
</dbReference>
<dbReference type="GO" id="GO:0009317">
    <property type="term" value="C:acetyl-CoA carboxylase complex"/>
    <property type="evidence" value="ECO:0007669"/>
    <property type="project" value="InterPro"/>
</dbReference>
<dbReference type="GO" id="GO:0009570">
    <property type="term" value="C:chloroplast stroma"/>
    <property type="evidence" value="ECO:0007669"/>
    <property type="project" value="UniProtKB-SubCell"/>
</dbReference>
<dbReference type="GO" id="GO:0003989">
    <property type="term" value="F:acetyl-CoA carboxylase activity"/>
    <property type="evidence" value="ECO:0007669"/>
    <property type="project" value="InterPro"/>
</dbReference>
<dbReference type="GO" id="GO:0005524">
    <property type="term" value="F:ATP binding"/>
    <property type="evidence" value="ECO:0007669"/>
    <property type="project" value="UniProtKB-KW"/>
</dbReference>
<dbReference type="GO" id="GO:0016743">
    <property type="term" value="F:carboxyl- or carbamoyltransferase activity"/>
    <property type="evidence" value="ECO:0007669"/>
    <property type="project" value="UniProtKB-UniRule"/>
</dbReference>
<dbReference type="GO" id="GO:0008270">
    <property type="term" value="F:zinc ion binding"/>
    <property type="evidence" value="ECO:0007669"/>
    <property type="project" value="UniProtKB-UniRule"/>
</dbReference>
<dbReference type="GO" id="GO:0006633">
    <property type="term" value="P:fatty acid biosynthetic process"/>
    <property type="evidence" value="ECO:0007669"/>
    <property type="project" value="UniProtKB-KW"/>
</dbReference>
<dbReference type="GO" id="GO:2001295">
    <property type="term" value="P:malonyl-CoA biosynthetic process"/>
    <property type="evidence" value="ECO:0007669"/>
    <property type="project" value="UniProtKB-UniRule"/>
</dbReference>
<dbReference type="Gene3D" id="3.90.226.10">
    <property type="entry name" value="2-enoyl-CoA Hydratase, Chain A, domain 1"/>
    <property type="match status" value="1"/>
</dbReference>
<dbReference type="HAMAP" id="MF_01395">
    <property type="entry name" value="AcetylCoA_CT_beta"/>
    <property type="match status" value="1"/>
</dbReference>
<dbReference type="InterPro" id="IPR034733">
    <property type="entry name" value="AcCoA_carboxyl_beta"/>
</dbReference>
<dbReference type="InterPro" id="IPR000438">
    <property type="entry name" value="Acetyl_CoA_COase_Trfase_b_su"/>
</dbReference>
<dbReference type="InterPro" id="IPR029045">
    <property type="entry name" value="ClpP/crotonase-like_dom_sf"/>
</dbReference>
<dbReference type="InterPro" id="IPR011762">
    <property type="entry name" value="COA_CT_N"/>
</dbReference>
<dbReference type="NCBIfam" id="TIGR00515">
    <property type="entry name" value="accD"/>
    <property type="match status" value="1"/>
</dbReference>
<dbReference type="PANTHER" id="PTHR42995">
    <property type="entry name" value="ACETYL-COENZYME A CARBOXYLASE CARBOXYL TRANSFERASE SUBUNIT BETA, CHLOROPLASTIC"/>
    <property type="match status" value="1"/>
</dbReference>
<dbReference type="PANTHER" id="PTHR42995:SF5">
    <property type="entry name" value="ACETYL-COENZYME A CARBOXYLASE CARBOXYL TRANSFERASE SUBUNIT BETA, CHLOROPLASTIC"/>
    <property type="match status" value="1"/>
</dbReference>
<dbReference type="Pfam" id="PF01039">
    <property type="entry name" value="Carboxyl_trans"/>
    <property type="match status" value="1"/>
</dbReference>
<dbReference type="PRINTS" id="PR01070">
    <property type="entry name" value="ACCCTRFRASEB"/>
</dbReference>
<dbReference type="SUPFAM" id="SSF52096">
    <property type="entry name" value="ClpP/crotonase"/>
    <property type="match status" value="1"/>
</dbReference>
<dbReference type="PROSITE" id="PS50980">
    <property type="entry name" value="COA_CT_NTER"/>
    <property type="match status" value="1"/>
</dbReference>
<sequence>MGKWWFNSIEGLEHRCGLSKSMDSLGYLIGNTSGSEDPTLNDTNKNIPSWGHSGSYSCNNVDHFFSVRDIWSFISDGTFLVRDNNGNCYSVYLDIENQVFEIDNDSSFLSELESSFSSYMNSSYLNSGSKSDNRYYDRYTYDIKYSWNNHINSCIDSYLRSEINIDSYISSGSDNYRDSYIYSYICSGESVSNSKSGSSSIRTGGNSSDFNRRGRSNDFDLNKKYRHLWVQCENCYGLNYKKFVSFKMHICEQCGYHLKMSSSERIELSIDSGTWDPMDEDMVSMDPIQFHSEEEPYRDRIDSYQRKTGLTEAVQTGIGQLNGIPVAIGVMDFQFMGGSMGSVVGEKITRLIEYATNRSLPVIMVCASGGARMQEGSLSLMQMAKISSASYDYQLNKKLFYVSILTSPTTGGVTASFGMLGDIIIAEPNAYIAFAGKRVIEQTLNKTVPDGSQAAEYSFHKGLFDPIVPRNPLKGVLNELFRLHGFFPLNQNSSRALGSVICSEL</sequence>
<keyword id="KW-0067">ATP-binding</keyword>
<keyword id="KW-0150">Chloroplast</keyword>
<keyword id="KW-0275">Fatty acid biosynthesis</keyword>
<keyword id="KW-0276">Fatty acid metabolism</keyword>
<keyword id="KW-0444">Lipid biosynthesis</keyword>
<keyword id="KW-0443">Lipid metabolism</keyword>
<keyword id="KW-0479">Metal-binding</keyword>
<keyword id="KW-0547">Nucleotide-binding</keyword>
<keyword id="KW-0934">Plastid</keyword>
<keyword id="KW-0808">Transferase</keyword>
<keyword id="KW-0862">Zinc</keyword>
<keyword id="KW-0863">Zinc-finger</keyword>
<proteinExistence type="inferred from homology"/>
<organism>
    <name type="scientific">Calycanthus floridus var. glaucus</name>
    <name type="common">Eastern sweetshrub</name>
    <name type="synonym">Calycanthus fertilis var. ferax</name>
    <dbReference type="NCBI Taxonomy" id="212734"/>
    <lineage>
        <taxon>Eukaryota</taxon>
        <taxon>Viridiplantae</taxon>
        <taxon>Streptophyta</taxon>
        <taxon>Embryophyta</taxon>
        <taxon>Tracheophyta</taxon>
        <taxon>Spermatophyta</taxon>
        <taxon>Magnoliopsida</taxon>
        <taxon>Magnoliidae</taxon>
        <taxon>Laurales</taxon>
        <taxon>Calycanthaceae</taxon>
        <taxon>Calycanthus</taxon>
    </lineage>
</organism>
<geneLocation type="chloroplast"/>
<feature type="chain" id="PRO_0000359125" description="Acetyl-coenzyme A carboxylase carboxyl transferase subunit beta, chloroplastic">
    <location>
        <begin position="1"/>
        <end position="505"/>
    </location>
</feature>
<feature type="domain" description="CoA carboxyltransferase N-terminal" evidence="3">
    <location>
        <begin position="228"/>
        <end position="499"/>
    </location>
</feature>
<feature type="zinc finger region" description="C4-type" evidence="2">
    <location>
        <begin position="232"/>
        <end position="254"/>
    </location>
</feature>
<feature type="region of interest" description="Disordered" evidence="4">
    <location>
        <begin position="189"/>
        <end position="213"/>
    </location>
</feature>
<feature type="compositionally biased region" description="Low complexity" evidence="4">
    <location>
        <begin position="189"/>
        <end position="205"/>
    </location>
</feature>
<feature type="binding site" evidence="2">
    <location>
        <position position="232"/>
    </location>
    <ligand>
        <name>Zn(2+)</name>
        <dbReference type="ChEBI" id="CHEBI:29105"/>
    </ligand>
</feature>
<feature type="binding site" evidence="2">
    <location>
        <position position="235"/>
    </location>
    <ligand>
        <name>Zn(2+)</name>
        <dbReference type="ChEBI" id="CHEBI:29105"/>
    </ligand>
</feature>
<feature type="binding site" evidence="2">
    <location>
        <position position="251"/>
    </location>
    <ligand>
        <name>Zn(2+)</name>
        <dbReference type="ChEBI" id="CHEBI:29105"/>
    </ligand>
</feature>
<feature type="binding site" evidence="2">
    <location>
        <position position="254"/>
    </location>
    <ligand>
        <name>Zn(2+)</name>
        <dbReference type="ChEBI" id="CHEBI:29105"/>
    </ligand>
</feature>
<evidence type="ECO:0000250" key="1"/>
<evidence type="ECO:0000255" key="2">
    <source>
        <dbReference type="HAMAP-Rule" id="MF_01395"/>
    </source>
</evidence>
<evidence type="ECO:0000255" key="3">
    <source>
        <dbReference type="PROSITE-ProRule" id="PRU01136"/>
    </source>
</evidence>
<evidence type="ECO:0000256" key="4">
    <source>
        <dbReference type="SAM" id="MobiDB-lite"/>
    </source>
</evidence>